<comment type="function">
    <text evidence="1 2">Nuclear receptor that lacks a DNA-binding domain and acts as a corepressor that inhibits the transcriptional activity of other nuclear receptors through heterodimeric interactions. Component of a cascade required for the development of the hypothalamic-pituitary-adrenal-gonadal axis (By similarity). May also have a role in the development of the embryo and in the maintenance of embryonic stem cell pluripotency (By similarity).</text>
</comment>
<comment type="subunit">
    <text evidence="1 2">Homodimer. Interacts with NR5A1, NR5A2, NR0B2 and with COPS2 (By similarity). Interacts with ESRRB; represses ESRRB activity at the GATA6 promoter (By similarity).</text>
</comment>
<comment type="subcellular location">
    <subcellularLocation>
        <location evidence="1">Nucleus</location>
    </subcellularLocation>
    <subcellularLocation>
        <location evidence="1">Cytoplasm</location>
    </subcellularLocation>
    <text evidence="1">Shuttles between the cytoplasm and nucleus. Homodimers exits in the cytoplasm and in the nucleus.</text>
</comment>
<comment type="domain">
    <text evidence="1">Homodimerization involved an interaction between amino and carboxy termini involving LXXLL motifs and steroid binding domain (AF-2 motif). Heterodimerizes with NR5A1 and NROB2 through its N-terminal LXXLL motifs.</text>
</comment>
<comment type="similarity">
    <text evidence="4">Belongs to the nuclear hormone receptor family. NR0 subfamily.</text>
</comment>
<sequence length="470" mass="51780">MAGENHQWQGSILYNMLMSAKQTRAAPEAPETRLVDQCWGCSCGDEPGVGREGLLGGRNVALLYRCCFCGKDHPRQGSILYSMLTSAKQTYATPKAPEATLGPCWGCSCGSDPGVGRTGLPGGRPVALLYRCCFCGEDHPRQGSILYSLLTSAKQTHVAPAAPEARPGGAWWDRSYFAQKPGGREALPGGRATALLYRCCFCGEDHPQQGSTLYCMPTSTNQAQAAPEERPRAPWWDASSGALRPVALKNPQVVCEAASAGLLKTLRFVKYLPCFQVLPLDQQLVLVRNCWASLLMLELAQDRLQFETVEVSEPSMLQKILTTRRRETGGNEPLPVPTLQPHLAPPAEARKVPSASQVQAIKCFLSKCWSLNISTKEYAYLKGTVLFNRDVPGLQCVKYIQGLQWGTQQILSEHTRMTHQGPHDRFIELNSALFLLRFINANVIAELFFRPIIGTVSMDDMMLEMLCTKI</sequence>
<dbReference type="EMBL" id="AF322893">
    <property type="protein sequence ID" value="AAK01644.1"/>
    <property type="molecule type" value="mRNA"/>
</dbReference>
<dbReference type="SMR" id="Q9BG96"/>
<dbReference type="GO" id="GO:0005737">
    <property type="term" value="C:cytoplasm"/>
    <property type="evidence" value="ECO:0000250"/>
    <property type="project" value="UniProtKB"/>
</dbReference>
<dbReference type="GO" id="GO:0016020">
    <property type="term" value="C:membrane"/>
    <property type="evidence" value="ECO:0000250"/>
    <property type="project" value="UniProtKB"/>
</dbReference>
<dbReference type="GO" id="GO:0005654">
    <property type="term" value="C:nucleoplasm"/>
    <property type="evidence" value="ECO:0007669"/>
    <property type="project" value="UniProtKB-ARBA"/>
</dbReference>
<dbReference type="GO" id="GO:0005634">
    <property type="term" value="C:nucleus"/>
    <property type="evidence" value="ECO:0000250"/>
    <property type="project" value="UniProtKB"/>
</dbReference>
<dbReference type="GO" id="GO:0005840">
    <property type="term" value="C:ribosome"/>
    <property type="evidence" value="ECO:0000250"/>
    <property type="project" value="UniProtKB"/>
</dbReference>
<dbReference type="GO" id="GO:0032448">
    <property type="term" value="F:DNA hairpin binding"/>
    <property type="evidence" value="ECO:0000250"/>
    <property type="project" value="UniProtKB"/>
</dbReference>
<dbReference type="GO" id="GO:0016922">
    <property type="term" value="F:nuclear receptor binding"/>
    <property type="evidence" value="ECO:0000250"/>
    <property type="project" value="UniProtKB"/>
</dbReference>
<dbReference type="GO" id="GO:0019904">
    <property type="term" value="F:protein domain specific binding"/>
    <property type="evidence" value="ECO:0000250"/>
    <property type="project" value="UniProtKB"/>
</dbReference>
<dbReference type="GO" id="GO:0042803">
    <property type="term" value="F:protein homodimerization activity"/>
    <property type="evidence" value="ECO:0000250"/>
    <property type="project" value="UniProtKB"/>
</dbReference>
<dbReference type="GO" id="GO:0003723">
    <property type="term" value="F:RNA binding"/>
    <property type="evidence" value="ECO:0000250"/>
    <property type="project" value="UniProtKB"/>
</dbReference>
<dbReference type="GO" id="GO:0003714">
    <property type="term" value="F:transcription corepressor activity"/>
    <property type="evidence" value="ECO:0007669"/>
    <property type="project" value="TreeGrafter"/>
</dbReference>
<dbReference type="GO" id="GO:0030325">
    <property type="term" value="P:adrenal gland development"/>
    <property type="evidence" value="ECO:0000250"/>
    <property type="project" value="UniProtKB"/>
</dbReference>
<dbReference type="GO" id="GO:0008406">
    <property type="term" value="P:gonad development"/>
    <property type="evidence" value="ECO:0000250"/>
    <property type="project" value="UniProtKB"/>
</dbReference>
<dbReference type="GO" id="GO:0008584">
    <property type="term" value="P:male gonad development"/>
    <property type="evidence" value="ECO:0000250"/>
    <property type="project" value="UniProtKB"/>
</dbReference>
<dbReference type="GO" id="GO:0045892">
    <property type="term" value="P:negative regulation of DNA-templated transcription"/>
    <property type="evidence" value="ECO:0000250"/>
    <property type="project" value="UniProtKB"/>
</dbReference>
<dbReference type="GO" id="GO:0033144">
    <property type="term" value="P:negative regulation of intracellular steroid hormone receptor signaling pathway"/>
    <property type="evidence" value="ECO:0000250"/>
    <property type="project" value="UniProtKB"/>
</dbReference>
<dbReference type="GO" id="GO:0010894">
    <property type="term" value="P:negative regulation of steroid biosynthetic process"/>
    <property type="evidence" value="ECO:0000250"/>
    <property type="project" value="HGNC-UCL"/>
</dbReference>
<dbReference type="GO" id="GO:0000122">
    <property type="term" value="P:negative regulation of transcription by RNA polymerase II"/>
    <property type="evidence" value="ECO:0007669"/>
    <property type="project" value="TreeGrafter"/>
</dbReference>
<dbReference type="GO" id="GO:0008104">
    <property type="term" value="P:protein localization"/>
    <property type="evidence" value="ECO:0000250"/>
    <property type="project" value="UniProtKB"/>
</dbReference>
<dbReference type="GO" id="GO:0007283">
    <property type="term" value="P:spermatogenesis"/>
    <property type="evidence" value="ECO:0007669"/>
    <property type="project" value="TreeGrafter"/>
</dbReference>
<dbReference type="CDD" id="cd07350">
    <property type="entry name" value="NR_LBD_Dax1"/>
    <property type="match status" value="1"/>
</dbReference>
<dbReference type="FunFam" id="1.10.565.10:FF:000027">
    <property type="entry name" value="nuclear receptor subfamily 0 group B member 1"/>
    <property type="match status" value="1"/>
</dbReference>
<dbReference type="Gene3D" id="1.10.565.10">
    <property type="entry name" value="Retinoid X Receptor"/>
    <property type="match status" value="1"/>
</dbReference>
<dbReference type="InterPro" id="IPR035500">
    <property type="entry name" value="NHR-like_dom_sf"/>
</dbReference>
<dbReference type="InterPro" id="IPR033544">
    <property type="entry name" value="NR0B1/2"/>
</dbReference>
<dbReference type="InterPro" id="IPR000536">
    <property type="entry name" value="Nucl_hrmn_rcpt_lig-bd"/>
</dbReference>
<dbReference type="InterPro" id="IPR001723">
    <property type="entry name" value="Nuclear_hrmn_rcpt"/>
</dbReference>
<dbReference type="InterPro" id="IPR025900">
    <property type="entry name" value="Nuclear_receptor_repeat"/>
</dbReference>
<dbReference type="PANTHER" id="PTHR24081">
    <property type="entry name" value="NUCLEAR RECEPTOR SUBFAMILY 0 GROUP B"/>
    <property type="match status" value="1"/>
</dbReference>
<dbReference type="PANTHER" id="PTHR24081:SF1">
    <property type="entry name" value="NUCLEAR RECEPTOR SUBFAMILY 0 GROUP B MEMBER 1"/>
    <property type="match status" value="1"/>
</dbReference>
<dbReference type="Pfam" id="PF00104">
    <property type="entry name" value="Hormone_recep"/>
    <property type="match status" value="1"/>
</dbReference>
<dbReference type="Pfam" id="PF14046">
    <property type="entry name" value="NR_Repeat"/>
    <property type="match status" value="4"/>
</dbReference>
<dbReference type="PRINTS" id="PR00398">
    <property type="entry name" value="STRDHORMONER"/>
</dbReference>
<dbReference type="SMART" id="SM00430">
    <property type="entry name" value="HOLI"/>
    <property type="match status" value="1"/>
</dbReference>
<dbReference type="SUPFAM" id="SSF48508">
    <property type="entry name" value="Nuclear receptor ligand-binding domain"/>
    <property type="match status" value="1"/>
</dbReference>
<dbReference type="PROSITE" id="PS51843">
    <property type="entry name" value="NR_LBD"/>
    <property type="match status" value="1"/>
</dbReference>
<evidence type="ECO:0000250" key="1">
    <source>
        <dbReference type="UniProtKB" id="P51843"/>
    </source>
</evidence>
<evidence type="ECO:0000250" key="2">
    <source>
        <dbReference type="UniProtKB" id="Q61066"/>
    </source>
</evidence>
<evidence type="ECO:0000255" key="3">
    <source>
        <dbReference type="PROSITE-ProRule" id="PRU01189"/>
    </source>
</evidence>
<evidence type="ECO:0000305" key="4"/>
<gene>
    <name type="primary">NR0B1</name>
    <name type="synonym">DAX1</name>
</gene>
<accession>Q9BG96</accession>
<proteinExistence type="evidence at transcript level"/>
<name>NR0B1_PONPY</name>
<protein>
    <recommendedName>
        <fullName>Nuclear receptor subfamily 0 group B member 1</fullName>
    </recommendedName>
    <alternativeName>
        <fullName>Nuclear receptor DAX-1</fullName>
    </alternativeName>
</protein>
<organism>
    <name type="scientific">Pongo pygmaeus</name>
    <name type="common">Bornean orangutan</name>
    <dbReference type="NCBI Taxonomy" id="9600"/>
    <lineage>
        <taxon>Eukaryota</taxon>
        <taxon>Metazoa</taxon>
        <taxon>Chordata</taxon>
        <taxon>Craniata</taxon>
        <taxon>Vertebrata</taxon>
        <taxon>Euteleostomi</taxon>
        <taxon>Mammalia</taxon>
        <taxon>Eutheria</taxon>
        <taxon>Euarchontoglires</taxon>
        <taxon>Primates</taxon>
        <taxon>Haplorrhini</taxon>
        <taxon>Catarrhini</taxon>
        <taxon>Hominidae</taxon>
        <taxon>Pongo</taxon>
    </lineage>
</organism>
<reference key="1">
    <citation type="journal article" date="2001" name="Am. J. Hum. Genet.">
        <title>Primate DAX1, SRY, and SOX9: evolutionary stratification of sex-determination pathway.</title>
        <authorList>
            <person name="Patel M."/>
            <person name="Dorman K.S."/>
            <person name="Zhang Y.-H."/>
            <person name="Huang B.-L."/>
            <person name="Arnold A.P."/>
            <person name="Sinsheimer J.S."/>
            <person name="Vilain E."/>
            <person name="McCabe E.R.B."/>
        </authorList>
    </citation>
    <scope>NUCLEOTIDE SEQUENCE [MRNA]</scope>
</reference>
<keyword id="KW-0963">Cytoplasm</keyword>
<keyword id="KW-0539">Nucleus</keyword>
<keyword id="KW-0675">Receptor</keyword>
<keyword id="KW-0677">Repeat</keyword>
<keyword id="KW-0678">Repressor</keyword>
<keyword id="KW-0804">Transcription</keyword>
<keyword id="KW-0805">Transcription regulation</keyword>
<feature type="chain" id="PRO_0000280118" description="Nuclear receptor subfamily 0 group B member 1">
    <location>
        <begin position="1"/>
        <end position="470"/>
    </location>
</feature>
<feature type="repeat" description="1">
    <location>
        <begin position="1"/>
        <end position="67"/>
    </location>
</feature>
<feature type="repeat" description="2">
    <location>
        <begin position="68"/>
        <end position="133"/>
    </location>
</feature>
<feature type="repeat" description="3">
    <location>
        <begin position="134"/>
        <end position="200"/>
    </location>
</feature>
<feature type="repeat" description="4; truncated">
    <location>
        <begin position="201"/>
        <end position="253"/>
    </location>
</feature>
<feature type="domain" description="NR LBD" evidence="3">
    <location>
        <begin position="215"/>
        <end position="469"/>
    </location>
</feature>
<feature type="region of interest" description="4 X 67 AA tandem repeats">
    <location>
        <begin position="1"/>
        <end position="253"/>
    </location>
</feature>
<feature type="short sequence motif" description="LXXLL motif 1">
    <location>
        <begin position="13"/>
        <end position="17"/>
    </location>
</feature>
<feature type="short sequence motif" description="LXXLL motif 2">
    <location>
        <begin position="80"/>
        <end position="84"/>
    </location>
</feature>
<feature type="short sequence motif" description="LXXLL motif 3">
    <location>
        <begin position="146"/>
        <end position="150"/>
    </location>
</feature>
<feature type="short sequence motif" description="AF-2 motif">
    <location>
        <begin position="461"/>
        <end position="466"/>
    </location>
</feature>